<name>RPOZ_PROM9</name>
<keyword id="KW-0240">DNA-directed RNA polymerase</keyword>
<keyword id="KW-0548">Nucleotidyltransferase</keyword>
<keyword id="KW-0804">Transcription</keyword>
<keyword id="KW-0808">Transferase</keyword>
<sequence>MNVSNNAGIDSNDLAKRGESLIRKSTNRYLTTVRIAFRAKQRRFDDFDGLLEESTIKPVQRSIIELSDEQDQPDLLPG</sequence>
<protein>
    <recommendedName>
        <fullName evidence="1">DNA-directed RNA polymerase subunit omega</fullName>
        <shortName evidence="1">RNAP omega subunit</shortName>
        <ecNumber evidence="1">2.7.7.6</ecNumber>
    </recommendedName>
    <alternativeName>
        <fullName evidence="1">RNA polymerase omega subunit</fullName>
    </alternativeName>
    <alternativeName>
        <fullName evidence="1">Transcriptase subunit omega</fullName>
    </alternativeName>
</protein>
<evidence type="ECO:0000255" key="1">
    <source>
        <dbReference type="HAMAP-Rule" id="MF_00366"/>
    </source>
</evidence>
<dbReference type="EC" id="2.7.7.6" evidence="1"/>
<dbReference type="EMBL" id="CP000111">
    <property type="protein sequence ID" value="ABB50584.1"/>
    <property type="molecule type" value="Genomic_DNA"/>
</dbReference>
<dbReference type="RefSeq" id="WP_011377067.1">
    <property type="nucleotide sequence ID" value="NC_007577.1"/>
</dbReference>
<dbReference type="SMR" id="Q318W1"/>
<dbReference type="STRING" id="74546.PMT9312_1524"/>
<dbReference type="KEGG" id="pmi:PMT9312_1524"/>
<dbReference type="eggNOG" id="ENOG5032RMS">
    <property type="taxonomic scope" value="Bacteria"/>
</dbReference>
<dbReference type="HOGENOM" id="CLU_175526_0_0_3"/>
<dbReference type="OrthoDB" id="463386at2"/>
<dbReference type="Proteomes" id="UP000002715">
    <property type="component" value="Chromosome"/>
</dbReference>
<dbReference type="GO" id="GO:0000428">
    <property type="term" value="C:DNA-directed RNA polymerase complex"/>
    <property type="evidence" value="ECO:0007669"/>
    <property type="project" value="UniProtKB-KW"/>
</dbReference>
<dbReference type="GO" id="GO:0003677">
    <property type="term" value="F:DNA binding"/>
    <property type="evidence" value="ECO:0007669"/>
    <property type="project" value="UniProtKB-UniRule"/>
</dbReference>
<dbReference type="GO" id="GO:0003899">
    <property type="term" value="F:DNA-directed RNA polymerase activity"/>
    <property type="evidence" value="ECO:0007669"/>
    <property type="project" value="UniProtKB-UniRule"/>
</dbReference>
<dbReference type="GO" id="GO:0006351">
    <property type="term" value="P:DNA-templated transcription"/>
    <property type="evidence" value="ECO:0007669"/>
    <property type="project" value="UniProtKB-UniRule"/>
</dbReference>
<dbReference type="HAMAP" id="MF_00366">
    <property type="entry name" value="RNApol_bact_RpoZ"/>
    <property type="match status" value="1"/>
</dbReference>
<dbReference type="InterPro" id="IPR003716">
    <property type="entry name" value="DNA-dir_RNA_pol_omega"/>
</dbReference>
<dbReference type="InterPro" id="IPR006110">
    <property type="entry name" value="Pol_omega/Rpo6/RPB6"/>
</dbReference>
<dbReference type="NCBIfam" id="NF001574">
    <property type="entry name" value="PRK00392.2-5"/>
    <property type="match status" value="1"/>
</dbReference>
<dbReference type="Pfam" id="PF01192">
    <property type="entry name" value="RNA_pol_Rpb6"/>
    <property type="match status" value="1"/>
</dbReference>
<feature type="chain" id="PRO_0000237486" description="DNA-directed RNA polymerase subunit omega">
    <location>
        <begin position="1"/>
        <end position="78"/>
    </location>
</feature>
<gene>
    <name evidence="1" type="primary">rpoZ</name>
    <name type="ordered locus">PMT9312_1524</name>
</gene>
<accession>Q318W1</accession>
<organism>
    <name type="scientific">Prochlorococcus marinus (strain MIT 9312)</name>
    <dbReference type="NCBI Taxonomy" id="74546"/>
    <lineage>
        <taxon>Bacteria</taxon>
        <taxon>Bacillati</taxon>
        <taxon>Cyanobacteriota</taxon>
        <taxon>Cyanophyceae</taxon>
        <taxon>Synechococcales</taxon>
        <taxon>Prochlorococcaceae</taxon>
        <taxon>Prochlorococcus</taxon>
    </lineage>
</organism>
<reference key="1">
    <citation type="journal article" date="2006" name="Science">
        <title>Genomic islands and the ecology and evolution of Prochlorococcus.</title>
        <authorList>
            <person name="Coleman M.L."/>
            <person name="Sullivan M.B."/>
            <person name="Martiny A.C."/>
            <person name="Steglich C."/>
            <person name="Barry K."/>
            <person name="Delong E.F."/>
            <person name="Chisholm S.W."/>
        </authorList>
    </citation>
    <scope>NUCLEOTIDE SEQUENCE [LARGE SCALE GENOMIC DNA]</scope>
    <source>
        <strain>MIT 9312</strain>
    </source>
</reference>
<comment type="function">
    <text evidence="1">Promotes RNA polymerase assembly. Latches the N- and C-terminal regions of the beta' subunit thereby facilitating its interaction with the beta and alpha subunits.</text>
</comment>
<comment type="catalytic activity">
    <reaction evidence="1">
        <text>RNA(n) + a ribonucleoside 5'-triphosphate = RNA(n+1) + diphosphate</text>
        <dbReference type="Rhea" id="RHEA:21248"/>
        <dbReference type="Rhea" id="RHEA-COMP:14527"/>
        <dbReference type="Rhea" id="RHEA-COMP:17342"/>
        <dbReference type="ChEBI" id="CHEBI:33019"/>
        <dbReference type="ChEBI" id="CHEBI:61557"/>
        <dbReference type="ChEBI" id="CHEBI:140395"/>
        <dbReference type="EC" id="2.7.7.6"/>
    </reaction>
</comment>
<comment type="subunit">
    <text evidence="1">In cyanobacteria the RNAP catalytic core is composed of 2 alpha, 1 beta, 1 beta', 1 gamma and 1 omega subunit. When a sigma factor is associated with the core the holoenzyme is formed, which can initiate transcription.</text>
</comment>
<comment type="similarity">
    <text evidence="1">Belongs to the RNA polymerase subunit omega family.</text>
</comment>
<proteinExistence type="inferred from homology"/>